<dbReference type="EC" id="3.4.21.92" evidence="2"/>
<dbReference type="EMBL" id="AE005174">
    <property type="protein sequence ID" value="AAG54787.1"/>
    <property type="molecule type" value="Genomic_DNA"/>
</dbReference>
<dbReference type="EMBL" id="BA000007">
    <property type="protein sequence ID" value="BAB33914.1"/>
    <property type="molecule type" value="Genomic_DNA"/>
</dbReference>
<dbReference type="PIR" id="C90690">
    <property type="entry name" value="C90690"/>
</dbReference>
<dbReference type="PIR" id="G85540">
    <property type="entry name" value="G85540"/>
</dbReference>
<dbReference type="RefSeq" id="NP_308518.1">
    <property type="nucleotide sequence ID" value="NC_002695.1"/>
</dbReference>
<dbReference type="RefSeq" id="WP_000122253.1">
    <property type="nucleotide sequence ID" value="NZ_VOAI01000005.1"/>
</dbReference>
<dbReference type="SMR" id="P0A6G9"/>
<dbReference type="STRING" id="155864.Z0542"/>
<dbReference type="MEROPS" id="S14.001"/>
<dbReference type="GeneID" id="914593"/>
<dbReference type="GeneID" id="93777017"/>
<dbReference type="KEGG" id="ece:Z0542"/>
<dbReference type="KEGG" id="ecs:ECs_0491"/>
<dbReference type="PATRIC" id="fig|386585.9.peg.594"/>
<dbReference type="eggNOG" id="COG0740">
    <property type="taxonomic scope" value="Bacteria"/>
</dbReference>
<dbReference type="HOGENOM" id="CLU_058707_3_2_6"/>
<dbReference type="OMA" id="RDYWMKA"/>
<dbReference type="Proteomes" id="UP000000558">
    <property type="component" value="Chromosome"/>
</dbReference>
<dbReference type="Proteomes" id="UP000002519">
    <property type="component" value="Chromosome"/>
</dbReference>
<dbReference type="GO" id="GO:0005737">
    <property type="term" value="C:cytoplasm"/>
    <property type="evidence" value="ECO:0007669"/>
    <property type="project" value="UniProtKB-SubCell"/>
</dbReference>
<dbReference type="GO" id="GO:0009368">
    <property type="term" value="C:endopeptidase Clp complex"/>
    <property type="evidence" value="ECO:0007669"/>
    <property type="project" value="TreeGrafter"/>
</dbReference>
<dbReference type="GO" id="GO:0004176">
    <property type="term" value="F:ATP-dependent peptidase activity"/>
    <property type="evidence" value="ECO:0007669"/>
    <property type="project" value="InterPro"/>
</dbReference>
<dbReference type="GO" id="GO:0051117">
    <property type="term" value="F:ATPase binding"/>
    <property type="evidence" value="ECO:0007669"/>
    <property type="project" value="TreeGrafter"/>
</dbReference>
<dbReference type="GO" id="GO:0004252">
    <property type="term" value="F:serine-type endopeptidase activity"/>
    <property type="evidence" value="ECO:0007669"/>
    <property type="project" value="UniProtKB-UniRule"/>
</dbReference>
<dbReference type="GO" id="GO:0006515">
    <property type="term" value="P:protein quality control for misfolded or incompletely synthesized proteins"/>
    <property type="evidence" value="ECO:0007669"/>
    <property type="project" value="TreeGrafter"/>
</dbReference>
<dbReference type="CDD" id="cd07017">
    <property type="entry name" value="S14_ClpP_2"/>
    <property type="match status" value="1"/>
</dbReference>
<dbReference type="FunFam" id="3.90.226.10:FF:000001">
    <property type="entry name" value="ATP-dependent Clp protease proteolytic subunit"/>
    <property type="match status" value="1"/>
</dbReference>
<dbReference type="Gene3D" id="3.90.226.10">
    <property type="entry name" value="2-enoyl-CoA Hydratase, Chain A, domain 1"/>
    <property type="match status" value="1"/>
</dbReference>
<dbReference type="HAMAP" id="MF_00444">
    <property type="entry name" value="ClpP"/>
    <property type="match status" value="1"/>
</dbReference>
<dbReference type="InterPro" id="IPR001907">
    <property type="entry name" value="ClpP"/>
</dbReference>
<dbReference type="InterPro" id="IPR029045">
    <property type="entry name" value="ClpP/crotonase-like_dom_sf"/>
</dbReference>
<dbReference type="InterPro" id="IPR023562">
    <property type="entry name" value="ClpP/TepA"/>
</dbReference>
<dbReference type="InterPro" id="IPR033135">
    <property type="entry name" value="ClpP_His_AS"/>
</dbReference>
<dbReference type="InterPro" id="IPR018215">
    <property type="entry name" value="ClpP_Ser_AS"/>
</dbReference>
<dbReference type="NCBIfam" id="TIGR00493">
    <property type="entry name" value="clpP"/>
    <property type="match status" value="1"/>
</dbReference>
<dbReference type="NCBIfam" id="NF001368">
    <property type="entry name" value="PRK00277.1"/>
    <property type="match status" value="1"/>
</dbReference>
<dbReference type="NCBIfam" id="NF009205">
    <property type="entry name" value="PRK12553.1"/>
    <property type="match status" value="1"/>
</dbReference>
<dbReference type="PANTHER" id="PTHR10381">
    <property type="entry name" value="ATP-DEPENDENT CLP PROTEASE PROTEOLYTIC SUBUNIT"/>
    <property type="match status" value="1"/>
</dbReference>
<dbReference type="PANTHER" id="PTHR10381:SF70">
    <property type="entry name" value="ATP-DEPENDENT CLP PROTEASE PROTEOLYTIC SUBUNIT"/>
    <property type="match status" value="1"/>
</dbReference>
<dbReference type="Pfam" id="PF00574">
    <property type="entry name" value="CLP_protease"/>
    <property type="match status" value="1"/>
</dbReference>
<dbReference type="PRINTS" id="PR00127">
    <property type="entry name" value="CLPPROTEASEP"/>
</dbReference>
<dbReference type="SUPFAM" id="SSF52096">
    <property type="entry name" value="ClpP/crotonase"/>
    <property type="match status" value="1"/>
</dbReference>
<dbReference type="PROSITE" id="PS00382">
    <property type="entry name" value="CLP_PROTEASE_HIS"/>
    <property type="match status" value="1"/>
</dbReference>
<dbReference type="PROSITE" id="PS00381">
    <property type="entry name" value="CLP_PROTEASE_SER"/>
    <property type="match status" value="1"/>
</dbReference>
<reference key="1">
    <citation type="journal article" date="2001" name="Nature">
        <title>Genome sequence of enterohaemorrhagic Escherichia coli O157:H7.</title>
        <authorList>
            <person name="Perna N.T."/>
            <person name="Plunkett G. III"/>
            <person name="Burland V."/>
            <person name="Mau B."/>
            <person name="Glasner J.D."/>
            <person name="Rose D.J."/>
            <person name="Mayhew G.F."/>
            <person name="Evans P.S."/>
            <person name="Gregor J."/>
            <person name="Kirkpatrick H.A."/>
            <person name="Posfai G."/>
            <person name="Hackett J."/>
            <person name="Klink S."/>
            <person name="Boutin A."/>
            <person name="Shao Y."/>
            <person name="Miller L."/>
            <person name="Grotbeck E.J."/>
            <person name="Davis N.W."/>
            <person name="Lim A."/>
            <person name="Dimalanta E.T."/>
            <person name="Potamousis K."/>
            <person name="Apodaca J."/>
            <person name="Anantharaman T.S."/>
            <person name="Lin J."/>
            <person name="Yen G."/>
            <person name="Schwartz D.C."/>
            <person name="Welch R.A."/>
            <person name="Blattner F.R."/>
        </authorList>
    </citation>
    <scope>NUCLEOTIDE SEQUENCE [LARGE SCALE GENOMIC DNA]</scope>
    <source>
        <strain>O157:H7 / EDL933 / ATCC 700927 / EHEC</strain>
    </source>
</reference>
<reference key="2">
    <citation type="journal article" date="2001" name="DNA Res.">
        <title>Complete genome sequence of enterohemorrhagic Escherichia coli O157:H7 and genomic comparison with a laboratory strain K-12.</title>
        <authorList>
            <person name="Hayashi T."/>
            <person name="Makino K."/>
            <person name="Ohnishi M."/>
            <person name="Kurokawa K."/>
            <person name="Ishii K."/>
            <person name="Yokoyama K."/>
            <person name="Han C.-G."/>
            <person name="Ohtsubo E."/>
            <person name="Nakayama K."/>
            <person name="Murata T."/>
            <person name="Tanaka M."/>
            <person name="Tobe T."/>
            <person name="Iida T."/>
            <person name="Takami H."/>
            <person name="Honda T."/>
            <person name="Sasakawa C."/>
            <person name="Ogasawara N."/>
            <person name="Yasunaga T."/>
            <person name="Kuhara S."/>
            <person name="Shiba T."/>
            <person name="Hattori M."/>
            <person name="Shinagawa H."/>
        </authorList>
    </citation>
    <scope>NUCLEOTIDE SEQUENCE [LARGE SCALE GENOMIC DNA]</scope>
    <source>
        <strain>O157:H7 / Sakai / RIMD 0509952 / EHEC</strain>
    </source>
</reference>
<name>CLPP_ECO57</name>
<feature type="propeptide" id="PRO_0000268014" evidence="1">
    <location>
        <begin position="1"/>
        <end position="14"/>
    </location>
</feature>
<feature type="chain" id="PRO_0000179553" description="ATP-dependent Clp protease proteolytic subunit">
    <location>
        <begin position="15"/>
        <end position="207"/>
    </location>
</feature>
<feature type="active site" description="Nucleophile" evidence="2">
    <location>
        <position position="111"/>
    </location>
</feature>
<feature type="active site" evidence="2">
    <location>
        <position position="136"/>
    </location>
</feature>
<protein>
    <recommendedName>
        <fullName evidence="2">ATP-dependent Clp protease proteolytic subunit</fullName>
        <ecNumber evidence="2">3.4.21.92</ecNumber>
    </recommendedName>
    <alternativeName>
        <fullName evidence="2">Endopeptidase Clp</fullName>
    </alternativeName>
</protein>
<comment type="function">
    <text evidence="2">Cleaves peptides in various proteins in a process that requires ATP hydrolysis. Has a chymotrypsin-like activity. Plays a major role in the degradation of misfolded proteins.</text>
</comment>
<comment type="catalytic activity">
    <reaction evidence="2">
        <text>Hydrolysis of proteins to small peptides in the presence of ATP and magnesium. alpha-casein is the usual test substrate. In the absence of ATP, only oligopeptides shorter than five residues are hydrolyzed (such as succinyl-Leu-Tyr-|-NHMec, and Leu-Tyr-Leu-|-Tyr-Trp, in which cleavage of the -Tyr-|-Leu- and -Tyr-|-Trp bonds also occurs).</text>
        <dbReference type="EC" id="3.4.21.92"/>
    </reaction>
</comment>
<comment type="subunit">
    <text evidence="2">Fourteen ClpP subunits assemble into 2 heptameric rings which stack back to back to give a disk-like structure with a central cavity, resembling the structure of eukaryotic proteasomes. Component of the ClpAP and ClpXP complexes.</text>
</comment>
<comment type="subcellular location">
    <subcellularLocation>
        <location evidence="2">Cytoplasm</location>
    </subcellularLocation>
</comment>
<comment type="similarity">
    <text evidence="2">Belongs to the peptidase S14 family.</text>
</comment>
<organism>
    <name type="scientific">Escherichia coli O157:H7</name>
    <dbReference type="NCBI Taxonomy" id="83334"/>
    <lineage>
        <taxon>Bacteria</taxon>
        <taxon>Pseudomonadati</taxon>
        <taxon>Pseudomonadota</taxon>
        <taxon>Gammaproteobacteria</taxon>
        <taxon>Enterobacterales</taxon>
        <taxon>Enterobacteriaceae</taxon>
        <taxon>Escherichia</taxon>
    </lineage>
</organism>
<keyword id="KW-0963">Cytoplasm</keyword>
<keyword id="KW-0378">Hydrolase</keyword>
<keyword id="KW-0645">Protease</keyword>
<keyword id="KW-1185">Reference proteome</keyword>
<keyword id="KW-0720">Serine protease</keyword>
<keyword id="KW-0865">Zymogen</keyword>
<sequence>MSYSGERDNFAPHMALVPMVIEQTSRGERSFDIYSRLLKERVIFLTGQVEDHMANLIVAQMLFLEAENPEKDIYLYINSPGGVITAGMSIYDTMQFIKPDVSTICMGQAASMGAFLLTAGAKGKRFCLPNSRVMIHQPLGGYQGQATDIEIHAREILKVKGRMNELMALHTGQSLEQIERDTERDRFLSAPEAVEYGLVDSILTHRN</sequence>
<proteinExistence type="inferred from homology"/>
<evidence type="ECO:0000250" key="1"/>
<evidence type="ECO:0000255" key="2">
    <source>
        <dbReference type="HAMAP-Rule" id="MF_00444"/>
    </source>
</evidence>
<accession>P0A6G9</accession>
<accession>P19245</accession>
<gene>
    <name evidence="2" type="primary">clpP</name>
    <name type="synonym">lopP</name>
    <name type="ordered locus">Z0542</name>
    <name type="ordered locus">ECs0491</name>
</gene>